<protein>
    <recommendedName>
        <fullName evidence="1">Beta-hexosaminidase</fullName>
        <ecNumber evidence="1">3.2.1.52</ecNumber>
    </recommendedName>
    <alternativeName>
        <fullName evidence="1">Beta-N-acetylhexosaminidase</fullName>
    </alternativeName>
    <alternativeName>
        <fullName evidence="1">N-acetyl-beta-glucosaminidase</fullName>
    </alternativeName>
</protein>
<dbReference type="EC" id="3.2.1.52" evidence="1"/>
<dbReference type="EMBL" id="CU928163">
    <property type="protein sequence ID" value="CAR12494.1"/>
    <property type="molecule type" value="Genomic_DNA"/>
</dbReference>
<dbReference type="RefSeq" id="WP_000529284.1">
    <property type="nucleotide sequence ID" value="NC_011751.1"/>
</dbReference>
<dbReference type="RefSeq" id="YP_002412037.1">
    <property type="nucleotide sequence ID" value="NC_011751.1"/>
</dbReference>
<dbReference type="SMR" id="B7NAY5"/>
<dbReference type="STRING" id="585056.ECUMN_1285"/>
<dbReference type="CAZy" id="GH3">
    <property type="family name" value="Glycoside Hydrolase Family 3"/>
</dbReference>
<dbReference type="KEGG" id="eum:ECUMN_1285"/>
<dbReference type="PATRIC" id="fig|585056.7.peg.1489"/>
<dbReference type="HOGENOM" id="CLU_008392_0_0_6"/>
<dbReference type="UniPathway" id="UPA00544"/>
<dbReference type="Proteomes" id="UP000007097">
    <property type="component" value="Chromosome"/>
</dbReference>
<dbReference type="GO" id="GO:0005737">
    <property type="term" value="C:cytoplasm"/>
    <property type="evidence" value="ECO:0007669"/>
    <property type="project" value="UniProtKB-SubCell"/>
</dbReference>
<dbReference type="GO" id="GO:0004563">
    <property type="term" value="F:beta-N-acetylhexosaminidase activity"/>
    <property type="evidence" value="ECO:0007669"/>
    <property type="project" value="UniProtKB-UniRule"/>
</dbReference>
<dbReference type="GO" id="GO:0005975">
    <property type="term" value="P:carbohydrate metabolic process"/>
    <property type="evidence" value="ECO:0007669"/>
    <property type="project" value="InterPro"/>
</dbReference>
<dbReference type="GO" id="GO:0051301">
    <property type="term" value="P:cell division"/>
    <property type="evidence" value="ECO:0007669"/>
    <property type="project" value="UniProtKB-KW"/>
</dbReference>
<dbReference type="GO" id="GO:0071555">
    <property type="term" value="P:cell wall organization"/>
    <property type="evidence" value="ECO:0007669"/>
    <property type="project" value="UniProtKB-KW"/>
</dbReference>
<dbReference type="GO" id="GO:0009252">
    <property type="term" value="P:peptidoglycan biosynthetic process"/>
    <property type="evidence" value="ECO:0007669"/>
    <property type="project" value="UniProtKB-KW"/>
</dbReference>
<dbReference type="GO" id="GO:0009254">
    <property type="term" value="P:peptidoglycan turnover"/>
    <property type="evidence" value="ECO:0007669"/>
    <property type="project" value="UniProtKB-UniRule"/>
</dbReference>
<dbReference type="GO" id="GO:0008360">
    <property type="term" value="P:regulation of cell shape"/>
    <property type="evidence" value="ECO:0007669"/>
    <property type="project" value="UniProtKB-KW"/>
</dbReference>
<dbReference type="FunFam" id="3.20.20.300:FF:000001">
    <property type="entry name" value="Beta-hexosaminidase"/>
    <property type="match status" value="1"/>
</dbReference>
<dbReference type="Gene3D" id="3.20.20.300">
    <property type="entry name" value="Glycoside hydrolase, family 3, N-terminal domain"/>
    <property type="match status" value="1"/>
</dbReference>
<dbReference type="HAMAP" id="MF_00364">
    <property type="entry name" value="NagZ"/>
    <property type="match status" value="1"/>
</dbReference>
<dbReference type="InterPro" id="IPR022956">
    <property type="entry name" value="Beta_hexosaminidase_bac"/>
</dbReference>
<dbReference type="InterPro" id="IPR019800">
    <property type="entry name" value="Glyco_hydro_3_AS"/>
</dbReference>
<dbReference type="InterPro" id="IPR001764">
    <property type="entry name" value="Glyco_hydro_3_N"/>
</dbReference>
<dbReference type="InterPro" id="IPR036962">
    <property type="entry name" value="Glyco_hydro_3_N_sf"/>
</dbReference>
<dbReference type="InterPro" id="IPR017853">
    <property type="entry name" value="Glycoside_hydrolase_SF"/>
</dbReference>
<dbReference type="InterPro" id="IPR050226">
    <property type="entry name" value="NagZ_Beta-hexosaminidase"/>
</dbReference>
<dbReference type="NCBIfam" id="NF003740">
    <property type="entry name" value="PRK05337.1"/>
    <property type="match status" value="1"/>
</dbReference>
<dbReference type="PANTHER" id="PTHR30480:SF13">
    <property type="entry name" value="BETA-HEXOSAMINIDASE"/>
    <property type="match status" value="1"/>
</dbReference>
<dbReference type="PANTHER" id="PTHR30480">
    <property type="entry name" value="BETA-HEXOSAMINIDASE-RELATED"/>
    <property type="match status" value="1"/>
</dbReference>
<dbReference type="Pfam" id="PF00933">
    <property type="entry name" value="Glyco_hydro_3"/>
    <property type="match status" value="1"/>
</dbReference>
<dbReference type="SUPFAM" id="SSF51445">
    <property type="entry name" value="(Trans)glycosidases"/>
    <property type="match status" value="1"/>
</dbReference>
<dbReference type="PROSITE" id="PS00775">
    <property type="entry name" value="GLYCOSYL_HYDROL_F3"/>
    <property type="match status" value="1"/>
</dbReference>
<keyword id="KW-0131">Cell cycle</keyword>
<keyword id="KW-0132">Cell division</keyword>
<keyword id="KW-0133">Cell shape</keyword>
<keyword id="KW-0961">Cell wall biogenesis/degradation</keyword>
<keyword id="KW-0963">Cytoplasm</keyword>
<keyword id="KW-0326">Glycosidase</keyword>
<keyword id="KW-0378">Hydrolase</keyword>
<keyword id="KW-0573">Peptidoglycan synthesis</keyword>
<gene>
    <name evidence="1" type="primary">nagZ</name>
    <name type="ordered locus">ECUMN_1285</name>
</gene>
<reference key="1">
    <citation type="journal article" date="2009" name="PLoS Genet.">
        <title>Organised genome dynamics in the Escherichia coli species results in highly diverse adaptive paths.</title>
        <authorList>
            <person name="Touchon M."/>
            <person name="Hoede C."/>
            <person name="Tenaillon O."/>
            <person name="Barbe V."/>
            <person name="Baeriswyl S."/>
            <person name="Bidet P."/>
            <person name="Bingen E."/>
            <person name="Bonacorsi S."/>
            <person name="Bouchier C."/>
            <person name="Bouvet O."/>
            <person name="Calteau A."/>
            <person name="Chiapello H."/>
            <person name="Clermont O."/>
            <person name="Cruveiller S."/>
            <person name="Danchin A."/>
            <person name="Diard M."/>
            <person name="Dossat C."/>
            <person name="Karoui M.E."/>
            <person name="Frapy E."/>
            <person name="Garry L."/>
            <person name="Ghigo J.M."/>
            <person name="Gilles A.M."/>
            <person name="Johnson J."/>
            <person name="Le Bouguenec C."/>
            <person name="Lescat M."/>
            <person name="Mangenot S."/>
            <person name="Martinez-Jehanne V."/>
            <person name="Matic I."/>
            <person name="Nassif X."/>
            <person name="Oztas S."/>
            <person name="Petit M.A."/>
            <person name="Pichon C."/>
            <person name="Rouy Z."/>
            <person name="Ruf C.S."/>
            <person name="Schneider D."/>
            <person name="Tourret J."/>
            <person name="Vacherie B."/>
            <person name="Vallenet D."/>
            <person name="Medigue C."/>
            <person name="Rocha E.P.C."/>
            <person name="Denamur E."/>
        </authorList>
    </citation>
    <scope>NUCLEOTIDE SEQUENCE [LARGE SCALE GENOMIC DNA]</scope>
    <source>
        <strain>UMN026 / ExPEC</strain>
    </source>
</reference>
<comment type="function">
    <text evidence="1">Plays a role in peptidoglycan recycling by cleaving the terminal beta-1,4-linked N-acetylglucosamine (GlcNAc) from peptide-linked peptidoglycan fragments, giving rise to free GlcNAc, anhydro-N-acetylmuramic acid and anhydro-N-acetylmuramic acid-linked peptides.</text>
</comment>
<comment type="catalytic activity">
    <reaction evidence="1">
        <text>Hydrolysis of terminal non-reducing N-acetyl-D-hexosamine residues in N-acetyl-beta-D-hexosaminides.</text>
        <dbReference type="EC" id="3.2.1.52"/>
    </reaction>
</comment>
<comment type="pathway">
    <text evidence="1">Cell wall biogenesis; peptidoglycan recycling.</text>
</comment>
<comment type="subcellular location">
    <subcellularLocation>
        <location evidence="1">Cytoplasm</location>
    </subcellularLocation>
</comment>
<comment type="similarity">
    <text evidence="1">Belongs to the glycosyl hydrolase 3 family. NagZ subfamily.</text>
</comment>
<proteinExistence type="inferred from homology"/>
<accession>B7NAY5</accession>
<evidence type="ECO:0000255" key="1">
    <source>
        <dbReference type="HAMAP-Rule" id="MF_00364"/>
    </source>
</evidence>
<organism>
    <name type="scientific">Escherichia coli O17:K52:H18 (strain UMN026 / ExPEC)</name>
    <dbReference type="NCBI Taxonomy" id="585056"/>
    <lineage>
        <taxon>Bacteria</taxon>
        <taxon>Pseudomonadati</taxon>
        <taxon>Pseudomonadota</taxon>
        <taxon>Gammaproteobacteria</taxon>
        <taxon>Enterobacterales</taxon>
        <taxon>Enterobacteriaceae</taxon>
        <taxon>Escherichia</taxon>
    </lineage>
</organism>
<feature type="chain" id="PRO_1000121058" description="Beta-hexosaminidase">
    <location>
        <begin position="1"/>
        <end position="341"/>
    </location>
</feature>
<feature type="active site" description="Proton donor/acceptor" evidence="1">
    <location>
        <position position="176"/>
    </location>
</feature>
<feature type="active site" description="Nucleophile" evidence="1">
    <location>
        <position position="248"/>
    </location>
</feature>
<feature type="binding site" evidence="1">
    <location>
        <position position="62"/>
    </location>
    <ligand>
        <name>substrate</name>
    </ligand>
</feature>
<feature type="binding site" evidence="1">
    <location>
        <position position="70"/>
    </location>
    <ligand>
        <name>substrate</name>
    </ligand>
</feature>
<feature type="binding site" evidence="1">
    <location>
        <position position="133"/>
    </location>
    <ligand>
        <name>substrate</name>
    </ligand>
</feature>
<feature type="binding site" evidence="1">
    <location>
        <begin position="163"/>
        <end position="164"/>
    </location>
    <ligand>
        <name>substrate</name>
    </ligand>
</feature>
<feature type="site" description="Important for catalytic activity" evidence="1">
    <location>
        <position position="174"/>
    </location>
</feature>
<sequence>MGPVMLDVEGYELDAEEREILAHPLVGGLILFTRNYHDPAQLRELVRQIRAASRNHLVVAVDQEGGRVQRFREGFTRLPAAQSFAALLGMEEGGKLAQEAGWLMASEMIAMDIDISFAPVLDVGHISAAIGERSYHADPEKALAIASRFIDGMHEAGMKTTGKHFPGHGAVTADSHKETPCDPRPQAEIRAKDMSVFSSLIRENKLDAIMPAHVIYSDVDPRPASGSPYWLKTVLRQELGFDGVIFSDDLSMEGAAIMGSYAERGQASLDAGCDMILVCNNRKGAVSVLDNLSPIKAERVTRLYHKGSFSRQELMDSARWKAISARLNQLHERWQEEKAGH</sequence>
<name>NAGZ_ECOLU</name>